<dbReference type="EC" id="2.1.1.-" evidence="1"/>
<dbReference type="EMBL" id="CP000300">
    <property type="protein sequence ID" value="ABE51849.1"/>
    <property type="molecule type" value="Genomic_DNA"/>
</dbReference>
<dbReference type="RefSeq" id="WP_011499002.1">
    <property type="nucleotide sequence ID" value="NC_007955.1"/>
</dbReference>
<dbReference type="SMR" id="Q12XH7"/>
<dbReference type="STRING" id="259564.Mbur_0902"/>
<dbReference type="GeneID" id="3998646"/>
<dbReference type="KEGG" id="mbu:Mbur_0902"/>
<dbReference type="HOGENOM" id="CLU_041220_0_2_2"/>
<dbReference type="OrthoDB" id="9883at2157"/>
<dbReference type="Proteomes" id="UP000001979">
    <property type="component" value="Chromosome"/>
</dbReference>
<dbReference type="GO" id="GO:0005737">
    <property type="term" value="C:cytoplasm"/>
    <property type="evidence" value="ECO:0007669"/>
    <property type="project" value="UniProtKB-SubCell"/>
</dbReference>
<dbReference type="GO" id="GO:0003723">
    <property type="term" value="F:RNA binding"/>
    <property type="evidence" value="ECO:0007669"/>
    <property type="project" value="UniProtKB-KW"/>
</dbReference>
<dbReference type="GO" id="GO:0000179">
    <property type="term" value="F:rRNA (adenine-N6,N6-)-dimethyltransferase activity"/>
    <property type="evidence" value="ECO:0007669"/>
    <property type="project" value="InterPro"/>
</dbReference>
<dbReference type="CDD" id="cd02440">
    <property type="entry name" value="AdoMet_MTases"/>
    <property type="match status" value="1"/>
</dbReference>
<dbReference type="FunFam" id="3.40.50.150:FF:000023">
    <property type="entry name" value="Ribosomal RNA small subunit methyltransferase A"/>
    <property type="match status" value="1"/>
</dbReference>
<dbReference type="Gene3D" id="1.10.8.100">
    <property type="entry name" value="Ribosomal RNA adenine dimethylase-like, domain 2"/>
    <property type="match status" value="1"/>
</dbReference>
<dbReference type="Gene3D" id="3.40.50.150">
    <property type="entry name" value="Vaccinia Virus protein VP39"/>
    <property type="match status" value="1"/>
</dbReference>
<dbReference type="HAMAP" id="MF_00607">
    <property type="entry name" value="16SrRNA_methyltr_A"/>
    <property type="match status" value="1"/>
</dbReference>
<dbReference type="InterPro" id="IPR001737">
    <property type="entry name" value="KsgA/Erm"/>
</dbReference>
<dbReference type="InterPro" id="IPR023165">
    <property type="entry name" value="rRNA_Ade_diMease-like_C"/>
</dbReference>
<dbReference type="InterPro" id="IPR020596">
    <property type="entry name" value="rRNA_Ade_Mease_Trfase_CS"/>
</dbReference>
<dbReference type="InterPro" id="IPR020598">
    <property type="entry name" value="rRNA_Ade_methylase_Trfase_N"/>
</dbReference>
<dbReference type="InterPro" id="IPR011530">
    <property type="entry name" value="rRNA_adenine_dimethylase"/>
</dbReference>
<dbReference type="InterPro" id="IPR029063">
    <property type="entry name" value="SAM-dependent_MTases_sf"/>
</dbReference>
<dbReference type="NCBIfam" id="TIGR00755">
    <property type="entry name" value="ksgA"/>
    <property type="match status" value="1"/>
</dbReference>
<dbReference type="PANTHER" id="PTHR11727">
    <property type="entry name" value="DIMETHYLADENOSINE TRANSFERASE"/>
    <property type="match status" value="1"/>
</dbReference>
<dbReference type="PANTHER" id="PTHR11727:SF7">
    <property type="entry name" value="DIMETHYLADENOSINE TRANSFERASE-RELATED"/>
    <property type="match status" value="1"/>
</dbReference>
<dbReference type="Pfam" id="PF00398">
    <property type="entry name" value="RrnaAD"/>
    <property type="match status" value="1"/>
</dbReference>
<dbReference type="SMART" id="SM00650">
    <property type="entry name" value="rADc"/>
    <property type="match status" value="1"/>
</dbReference>
<dbReference type="SUPFAM" id="SSF53335">
    <property type="entry name" value="S-adenosyl-L-methionine-dependent methyltransferases"/>
    <property type="match status" value="1"/>
</dbReference>
<dbReference type="PROSITE" id="PS01131">
    <property type="entry name" value="RRNA_A_DIMETH"/>
    <property type="match status" value="1"/>
</dbReference>
<dbReference type="PROSITE" id="PS51689">
    <property type="entry name" value="SAM_RNA_A_N6_MT"/>
    <property type="match status" value="1"/>
</dbReference>
<protein>
    <recommendedName>
        <fullName evidence="1">Probable ribosomal RNA small subunit methyltransferase A</fullName>
        <ecNumber evidence="1">2.1.1.-</ecNumber>
    </recommendedName>
    <alternativeName>
        <fullName evidence="1">16S rRNA dimethyladenosine transferase</fullName>
    </alternativeName>
    <alternativeName>
        <fullName evidence="1">16S rRNA dimethylase</fullName>
    </alternativeName>
    <alternativeName>
        <fullName evidence="1">S-adenosylmethionine-6-N',N'-adenosyl(rRNA) dimethyltransferase</fullName>
    </alternativeName>
</protein>
<feature type="chain" id="PRO_0000257379" description="Probable ribosomal RNA small subunit methyltransferase A">
    <location>
        <begin position="1"/>
        <end position="270"/>
    </location>
</feature>
<feature type="binding site" evidence="1">
    <location>
        <position position="19"/>
    </location>
    <ligand>
        <name>S-adenosyl-L-methionine</name>
        <dbReference type="ChEBI" id="CHEBI:59789"/>
    </ligand>
</feature>
<feature type="binding site" evidence="1">
    <location>
        <position position="21"/>
    </location>
    <ligand>
        <name>S-adenosyl-L-methionine</name>
        <dbReference type="ChEBI" id="CHEBI:59789"/>
    </ligand>
</feature>
<feature type="binding site" evidence="1">
    <location>
        <position position="46"/>
    </location>
    <ligand>
        <name>S-adenosyl-L-methionine</name>
        <dbReference type="ChEBI" id="CHEBI:59789"/>
    </ligand>
</feature>
<feature type="binding site" evidence="1">
    <location>
        <position position="67"/>
    </location>
    <ligand>
        <name>S-adenosyl-L-methionine</name>
        <dbReference type="ChEBI" id="CHEBI:59789"/>
    </ligand>
</feature>
<feature type="binding site" evidence="1">
    <location>
        <position position="92"/>
    </location>
    <ligand>
        <name>S-adenosyl-L-methionine</name>
        <dbReference type="ChEBI" id="CHEBI:59789"/>
    </ligand>
</feature>
<feature type="binding site" evidence="1">
    <location>
        <position position="107"/>
    </location>
    <ligand>
        <name>S-adenosyl-L-methionine</name>
        <dbReference type="ChEBI" id="CHEBI:59789"/>
    </ligand>
</feature>
<sequence>MVRKILQKYGIRGGCHDQHFLIDERSLDSIVDQAELSEKDVVLEIGGGIGNLTERLLEKAGKVYVIELDPALVHVLKDRFSDNEKLEIIPGDVLKLDLPKFNKVVANLPYSISSPITFKLFKHEFELGILMYQYEFAQRMVAKANTENYSRLSVNTHYFADADIIMKIPPSAFSPPPEVWSAVVKVVPRPSSFHTEDPQFFLDLVTAVFLQRRKKLRNAIVKGNHLLNVPNIKQIVAELPEEFMSKRAENLEPHELAEIANFIFKMRSTS</sequence>
<reference key="1">
    <citation type="journal article" date="2009" name="ISME J.">
        <title>The genome sequence of the psychrophilic archaeon, Methanococcoides burtonii: the role of genome evolution in cold adaptation.</title>
        <authorList>
            <person name="Allen M.A."/>
            <person name="Lauro F.M."/>
            <person name="Williams T.J."/>
            <person name="Burg D."/>
            <person name="Siddiqui K.S."/>
            <person name="De Francisci D."/>
            <person name="Chong K.W."/>
            <person name="Pilak O."/>
            <person name="Chew H.H."/>
            <person name="De Maere M.Z."/>
            <person name="Ting L."/>
            <person name="Katrib M."/>
            <person name="Ng C."/>
            <person name="Sowers K.R."/>
            <person name="Galperin M.Y."/>
            <person name="Anderson I.J."/>
            <person name="Ivanova N."/>
            <person name="Dalin E."/>
            <person name="Martinez M."/>
            <person name="Lapidus A."/>
            <person name="Hauser L."/>
            <person name="Land M."/>
            <person name="Thomas T."/>
            <person name="Cavicchioli R."/>
        </authorList>
    </citation>
    <scope>NUCLEOTIDE SEQUENCE [LARGE SCALE GENOMIC DNA]</scope>
    <source>
        <strain>DSM 6242 / NBRC 107633 / OCM 468 / ACE-M</strain>
    </source>
</reference>
<accession>Q12XH7</accession>
<comment type="function">
    <text evidence="1">Specifically dimethylates two adjacent adenosines in the loop of a conserved hairpin near the 3'-end of 16S rRNA in the 30S particle. May play a critical role in biogenesis of 30S subunits.</text>
</comment>
<comment type="subcellular location">
    <subcellularLocation>
        <location evidence="1">Cytoplasm</location>
    </subcellularLocation>
</comment>
<comment type="similarity">
    <text evidence="1">Belongs to the class I-like SAM-binding methyltransferase superfamily. rRNA adenine N(6)-methyltransferase family. RsmA subfamily.</text>
</comment>
<name>RSMA_METBU</name>
<evidence type="ECO:0000255" key="1">
    <source>
        <dbReference type="HAMAP-Rule" id="MF_00607"/>
    </source>
</evidence>
<organism>
    <name type="scientific">Methanococcoides burtonii (strain DSM 6242 / NBRC 107633 / OCM 468 / ACE-M)</name>
    <dbReference type="NCBI Taxonomy" id="259564"/>
    <lineage>
        <taxon>Archaea</taxon>
        <taxon>Methanobacteriati</taxon>
        <taxon>Methanobacteriota</taxon>
        <taxon>Stenosarchaea group</taxon>
        <taxon>Methanomicrobia</taxon>
        <taxon>Methanosarcinales</taxon>
        <taxon>Methanosarcinaceae</taxon>
        <taxon>Methanococcoides</taxon>
    </lineage>
</organism>
<proteinExistence type="inferred from homology"/>
<keyword id="KW-0963">Cytoplasm</keyword>
<keyword id="KW-0489">Methyltransferase</keyword>
<keyword id="KW-0694">RNA-binding</keyword>
<keyword id="KW-0698">rRNA processing</keyword>
<keyword id="KW-0949">S-adenosyl-L-methionine</keyword>
<keyword id="KW-0808">Transferase</keyword>
<gene>
    <name evidence="1" type="primary">rsmA</name>
    <name evidence="1" type="synonym">ksgA</name>
    <name type="ordered locus">Mbur_0902</name>
</gene>